<gene>
    <name type="primary">nlpI</name>
    <name type="ordered locus">ECP_3251</name>
</gene>
<organism>
    <name type="scientific">Escherichia coli O6:K15:H31 (strain 536 / UPEC)</name>
    <dbReference type="NCBI Taxonomy" id="362663"/>
    <lineage>
        <taxon>Bacteria</taxon>
        <taxon>Pseudomonadati</taxon>
        <taxon>Pseudomonadota</taxon>
        <taxon>Gammaproteobacteria</taxon>
        <taxon>Enterobacterales</taxon>
        <taxon>Enterobacteriaceae</taxon>
        <taxon>Escherichia</taxon>
    </lineage>
</organism>
<comment type="function">
    <text evidence="1">May be involved in cell division. May play a role in bacterial septation or regulation of cell wall degradation during cell division (By similarity).</text>
</comment>
<comment type="subunit">
    <text evidence="1">Homodimer.</text>
</comment>
<comment type="subcellular location">
    <subcellularLocation>
        <location evidence="2">Cell membrane</location>
        <topology evidence="2">Lipid-anchor</topology>
    </subcellularLocation>
</comment>
<protein>
    <recommendedName>
        <fullName>Lipoprotein NlpI</fullName>
    </recommendedName>
</protein>
<feature type="signal peptide" evidence="2">
    <location>
        <begin position="1"/>
        <end position="18"/>
    </location>
</feature>
<feature type="chain" id="PRO_0000413478" description="Lipoprotein NlpI">
    <location>
        <begin position="19"/>
        <end position="294"/>
    </location>
</feature>
<feature type="repeat" description="TPR 1">
    <location>
        <begin position="62"/>
        <end position="95"/>
    </location>
</feature>
<feature type="repeat" description="TPR 2">
    <location>
        <begin position="96"/>
        <end position="129"/>
    </location>
</feature>
<feature type="repeat" description="TPR 3">
    <location>
        <begin position="234"/>
        <end position="267"/>
    </location>
</feature>
<feature type="lipid moiety-binding region" description="N-palmitoyl cysteine" evidence="2">
    <location>
        <position position="19"/>
    </location>
</feature>
<feature type="lipid moiety-binding region" description="S-diacylglycerol cysteine" evidence="2">
    <location>
        <position position="19"/>
    </location>
</feature>
<sequence>MKPFLRWCFVATALTLAGCSNTSWRKSEVLAVPLQPTLQQEVILARMEQILASRALTDDERAQLLYERGVLYDSLGLRALARNDFSQALAIRPDMPEVFNYLGIYLTQAGNFDAAYEAFDSVLELDPTYNYAHLNRGIALYYGGRDKLAQDDLLAFYQDDPNDPFRSLWLYLAEQKLDEKQAKEVLKQHFEKSDKEQWGWNIVEFYLGNISEQTLMERLKADATDNTSLAEHLSETNFYLGKYYLSLGDLDSATALFKLAVANNVHNFVEHRYALLELSLLGQDQDDLAESDQQ</sequence>
<keyword id="KW-0131">Cell cycle</keyword>
<keyword id="KW-0132">Cell division</keyword>
<keyword id="KW-1003">Cell membrane</keyword>
<keyword id="KW-0449">Lipoprotein</keyword>
<keyword id="KW-0472">Membrane</keyword>
<keyword id="KW-0564">Palmitate</keyword>
<keyword id="KW-0677">Repeat</keyword>
<keyword id="KW-0732">Signal</keyword>
<keyword id="KW-0802">TPR repeat</keyword>
<name>NLPI_ECOL5</name>
<accession>Q0TCU6</accession>
<evidence type="ECO:0000250" key="1"/>
<evidence type="ECO:0000255" key="2">
    <source>
        <dbReference type="PROSITE-ProRule" id="PRU00303"/>
    </source>
</evidence>
<reference key="1">
    <citation type="journal article" date="2006" name="Mol. Microbiol.">
        <title>Role of pathogenicity island-associated integrases in the genome plasticity of uropathogenic Escherichia coli strain 536.</title>
        <authorList>
            <person name="Hochhut B."/>
            <person name="Wilde C."/>
            <person name="Balling G."/>
            <person name="Middendorf B."/>
            <person name="Dobrindt U."/>
            <person name="Brzuszkiewicz E."/>
            <person name="Gottschalk G."/>
            <person name="Carniel E."/>
            <person name="Hacker J."/>
        </authorList>
    </citation>
    <scope>NUCLEOTIDE SEQUENCE [LARGE SCALE GENOMIC DNA]</scope>
    <source>
        <strain>536 / UPEC</strain>
    </source>
</reference>
<proteinExistence type="inferred from homology"/>
<dbReference type="EMBL" id="CP000247">
    <property type="protein sequence ID" value="ABG71233.1"/>
    <property type="molecule type" value="Genomic_DNA"/>
</dbReference>
<dbReference type="RefSeq" id="WP_000802080.1">
    <property type="nucleotide sequence ID" value="NC_008253.1"/>
</dbReference>
<dbReference type="SMR" id="Q0TCU6"/>
<dbReference type="GeneID" id="93778820"/>
<dbReference type="KEGG" id="ecp:ECP_3251"/>
<dbReference type="HOGENOM" id="CLU_071600_0_0_6"/>
<dbReference type="Proteomes" id="UP000009182">
    <property type="component" value="Chromosome"/>
</dbReference>
<dbReference type="GO" id="GO:0005886">
    <property type="term" value="C:plasma membrane"/>
    <property type="evidence" value="ECO:0007669"/>
    <property type="project" value="UniProtKB-SubCell"/>
</dbReference>
<dbReference type="GO" id="GO:0051301">
    <property type="term" value="P:cell division"/>
    <property type="evidence" value="ECO:0007669"/>
    <property type="project" value="UniProtKB-KW"/>
</dbReference>
<dbReference type="FunFam" id="1.25.40.10:FF:000021">
    <property type="entry name" value="Lipoprotein NlpI"/>
    <property type="match status" value="1"/>
</dbReference>
<dbReference type="Gene3D" id="1.25.40.10">
    <property type="entry name" value="Tetratricopeptide repeat domain"/>
    <property type="match status" value="1"/>
</dbReference>
<dbReference type="InterPro" id="IPR023605">
    <property type="entry name" value="Lipoprotein_NlpI"/>
</dbReference>
<dbReference type="InterPro" id="IPR011990">
    <property type="entry name" value="TPR-like_helical_dom_sf"/>
</dbReference>
<dbReference type="InterPro" id="IPR019734">
    <property type="entry name" value="TPR_rpt"/>
</dbReference>
<dbReference type="InterPro" id="IPR050498">
    <property type="entry name" value="Ycf3"/>
</dbReference>
<dbReference type="NCBIfam" id="NF008391">
    <property type="entry name" value="PRK11189.1"/>
    <property type="match status" value="1"/>
</dbReference>
<dbReference type="PANTHER" id="PTHR44858">
    <property type="entry name" value="TETRATRICOPEPTIDE REPEAT PROTEIN 6"/>
    <property type="match status" value="1"/>
</dbReference>
<dbReference type="PANTHER" id="PTHR44858:SF1">
    <property type="entry name" value="UDP-N-ACETYLGLUCOSAMINE--PEPTIDE N-ACETYLGLUCOSAMINYLTRANSFERASE SPINDLY-RELATED"/>
    <property type="match status" value="1"/>
</dbReference>
<dbReference type="Pfam" id="PF13432">
    <property type="entry name" value="TPR_16"/>
    <property type="match status" value="1"/>
</dbReference>
<dbReference type="PIRSF" id="PIRSF004654">
    <property type="entry name" value="NlpI"/>
    <property type="match status" value="1"/>
</dbReference>
<dbReference type="SMART" id="SM00028">
    <property type="entry name" value="TPR"/>
    <property type="match status" value="3"/>
</dbReference>
<dbReference type="SUPFAM" id="SSF48452">
    <property type="entry name" value="TPR-like"/>
    <property type="match status" value="1"/>
</dbReference>
<dbReference type="PROSITE" id="PS51257">
    <property type="entry name" value="PROKAR_LIPOPROTEIN"/>
    <property type="match status" value="1"/>
</dbReference>
<dbReference type="PROSITE" id="PS50005">
    <property type="entry name" value="TPR"/>
    <property type="match status" value="3"/>
</dbReference>
<dbReference type="PROSITE" id="PS50293">
    <property type="entry name" value="TPR_REGION"/>
    <property type="match status" value="2"/>
</dbReference>